<reference key="1">
    <citation type="journal article" date="1996" name="DNA Res.">
        <title>Sequence analysis of the genome of the unicellular cyanobacterium Synechocystis sp. strain PCC6803. II. Sequence determination of the entire genome and assignment of potential protein-coding regions.</title>
        <authorList>
            <person name="Kaneko T."/>
            <person name="Sato S."/>
            <person name="Kotani H."/>
            <person name="Tanaka A."/>
            <person name="Asamizu E."/>
            <person name="Nakamura Y."/>
            <person name="Miyajima N."/>
            <person name="Hirosawa M."/>
            <person name="Sugiura M."/>
            <person name="Sasamoto S."/>
            <person name="Kimura T."/>
            <person name="Hosouchi T."/>
            <person name="Matsuno A."/>
            <person name="Muraki A."/>
            <person name="Nakazaki N."/>
            <person name="Naruo K."/>
            <person name="Okumura S."/>
            <person name="Shimpo S."/>
            <person name="Takeuchi C."/>
            <person name="Wada T."/>
            <person name="Watanabe A."/>
            <person name="Yamada M."/>
            <person name="Yasuda M."/>
            <person name="Tabata S."/>
        </authorList>
    </citation>
    <scope>NUCLEOTIDE SEQUENCE [LARGE SCALE GENOMIC DNA]</scope>
    <source>
        <strain>ATCC 27184 / PCC 6803 / Kazusa</strain>
    </source>
</reference>
<accession>P74007</accession>
<organism>
    <name type="scientific">Synechocystis sp. (strain ATCC 27184 / PCC 6803 / Kazusa)</name>
    <dbReference type="NCBI Taxonomy" id="1111708"/>
    <lineage>
        <taxon>Bacteria</taxon>
        <taxon>Bacillati</taxon>
        <taxon>Cyanobacteriota</taxon>
        <taxon>Cyanophyceae</taxon>
        <taxon>Synechococcales</taxon>
        <taxon>Merismopediaceae</taxon>
        <taxon>Synechocystis</taxon>
    </lineage>
</organism>
<sequence length="760" mass="86569">MNAVAALPTPTIHTTCAQDIHDIELPQWLEDCLQQWQREIEQGQDETTAPHCLICRAFCFAYDLHAQQRRKSGEPYIAHPVAVAGLLRDLGGDEAMIAAGFLHDVVEDTDISIEQIEALFGEETASLVEGVTKLSKFNFSSTTEHQAENFRRMFLAMAKDIRVIVVKLADRLHNMRTLDALSPEKQRRIARETKDIFAPLANRLGIWRFKWELEDLSFKYLEPDSYRKIQSLVVEKRGDRESRLETVKDMLRFRLRDEGIEHFELQGRPKHLYGIYYKMTSQDKAFEEIYDIAALRIIVESKGECYRALSVVHDVFKPIPGRFKDYIGLPKPNRYQSLHTTVLGLTSRPLEIQIRTEEMHHVAEYGIAAHWKYKESGGSENATLTSTDEKFTWLRQLLDWQSDLKDAQEYVENLKQNLFDDDVYVFTPKGEVISLARGATPVDFAYRIHTEVGHHMKGARVNGQWLGVDTRLKNGDIVEIVTQKNSHPSLDWLNFVVTPSARHRIRQWFKRSRRDENILRGRELLEKELGKTGLEALLKSEPMQKTAERCNYQNVEDLLAGLGYGEITSNSVVNRLRENNVNNVKNSQSSQEVTLASSPQVHPPTPPATGKDNSPIAGIEGLLYHIAGCCHPLPGEPIMGVVTRGARGISIHRQGCHNLEQMDGDRLIPVRWNPNTNNHQTYPVDIVIEAIDRVGVLKDILSRLSDNHINVRNADVKTHLGRPAIISLKIDIHDYQQLLGIMAKIKNMSDVMDLRRVISG</sequence>
<gene>
    <name type="primary">spoT</name>
    <name type="ordered locus">slr1325</name>
</gene>
<keyword id="KW-0378">Hydrolase</keyword>
<keyword id="KW-0464">Manganese</keyword>
<keyword id="KW-1185">Reference proteome</keyword>
<evidence type="ECO:0000250" key="1"/>
<evidence type="ECO:0000255" key="2">
    <source>
        <dbReference type="PROSITE-ProRule" id="PRU01007"/>
    </source>
</evidence>
<evidence type="ECO:0000255" key="3">
    <source>
        <dbReference type="PROSITE-ProRule" id="PRU01175"/>
    </source>
</evidence>
<evidence type="ECO:0000255" key="4">
    <source>
        <dbReference type="PROSITE-ProRule" id="PRU01228"/>
    </source>
</evidence>
<evidence type="ECO:0000256" key="5">
    <source>
        <dbReference type="SAM" id="MobiDB-lite"/>
    </source>
</evidence>
<evidence type="ECO:0000305" key="6"/>
<name>SPOT_SYNY3</name>
<protein>
    <recommendedName>
        <fullName>Probable guanosine-3',5'-bis(diphosphate) 3'-pyrophosphohydrolase</fullName>
        <ecNumber>3.1.7.2</ecNumber>
    </recommendedName>
    <alternativeName>
        <fullName>Penta-phosphate guanosine-3'-pyrophosphohydrolase</fullName>
        <shortName>(ppGpp)ase</shortName>
    </alternativeName>
</protein>
<feature type="chain" id="PRO_0000166576" description="Probable guanosine-3',5'-bis(diphosphate) 3'-pyrophosphohydrolase">
    <location>
        <begin position="1"/>
        <end position="760"/>
    </location>
</feature>
<feature type="domain" description="HD" evidence="3">
    <location>
        <begin position="76"/>
        <end position="175"/>
    </location>
</feature>
<feature type="domain" description="TGS" evidence="4">
    <location>
        <begin position="421"/>
        <end position="482"/>
    </location>
</feature>
<feature type="domain" description="ACT" evidence="2">
    <location>
        <begin position="685"/>
        <end position="759"/>
    </location>
</feature>
<feature type="region of interest" description="Disordered" evidence="5">
    <location>
        <begin position="585"/>
        <end position="614"/>
    </location>
</feature>
<proteinExistence type="inferred from homology"/>
<dbReference type="EC" id="3.1.7.2"/>
<dbReference type="EMBL" id="BA000022">
    <property type="protein sequence ID" value="BAA18078.1"/>
    <property type="molecule type" value="Genomic_DNA"/>
</dbReference>
<dbReference type="PIR" id="S75517">
    <property type="entry name" value="S75517"/>
</dbReference>
<dbReference type="SMR" id="P74007"/>
<dbReference type="FunCoup" id="P74007">
    <property type="interactions" value="503"/>
</dbReference>
<dbReference type="IntAct" id="P74007">
    <property type="interactions" value="3"/>
</dbReference>
<dbReference type="STRING" id="1148.gene:10498949"/>
<dbReference type="PaxDb" id="1148-1653162"/>
<dbReference type="EnsemblBacteria" id="BAA18078">
    <property type="protein sequence ID" value="BAA18078"/>
    <property type="gene ID" value="BAA18078"/>
</dbReference>
<dbReference type="KEGG" id="syn:slr1325"/>
<dbReference type="eggNOG" id="COG0317">
    <property type="taxonomic scope" value="Bacteria"/>
</dbReference>
<dbReference type="InParanoid" id="P74007"/>
<dbReference type="PhylomeDB" id="P74007"/>
<dbReference type="UniPathway" id="UPA00908">
    <property type="reaction ID" value="UER00886"/>
</dbReference>
<dbReference type="Proteomes" id="UP000001425">
    <property type="component" value="Chromosome"/>
</dbReference>
<dbReference type="GO" id="GO:0008893">
    <property type="term" value="F:guanosine-3',5'-bis(diphosphate) 3'-diphosphatase activity"/>
    <property type="evidence" value="ECO:0007669"/>
    <property type="project" value="UniProtKB-EC"/>
</dbReference>
<dbReference type="GO" id="GO:0015970">
    <property type="term" value="P:guanosine tetraphosphate biosynthetic process"/>
    <property type="evidence" value="ECO:0007669"/>
    <property type="project" value="UniProtKB-UniPathway"/>
</dbReference>
<dbReference type="CDD" id="cd04876">
    <property type="entry name" value="ACT_RelA-SpoT"/>
    <property type="match status" value="1"/>
</dbReference>
<dbReference type="CDD" id="cd00077">
    <property type="entry name" value="HDc"/>
    <property type="match status" value="1"/>
</dbReference>
<dbReference type="CDD" id="cd05399">
    <property type="entry name" value="NT_Rel-Spo_like"/>
    <property type="match status" value="1"/>
</dbReference>
<dbReference type="CDD" id="cd01668">
    <property type="entry name" value="TGS_RSH"/>
    <property type="match status" value="1"/>
</dbReference>
<dbReference type="FunFam" id="3.10.20.30:FF:000002">
    <property type="entry name" value="GTP pyrophosphokinase (RelA/SpoT)"/>
    <property type="match status" value="1"/>
</dbReference>
<dbReference type="FunFam" id="1.10.3210.10:FF:000001">
    <property type="entry name" value="GTP pyrophosphokinase RelA"/>
    <property type="match status" value="1"/>
</dbReference>
<dbReference type="FunFam" id="3.30.460.10:FF:000001">
    <property type="entry name" value="GTP pyrophosphokinase RelA"/>
    <property type="match status" value="1"/>
</dbReference>
<dbReference type="Gene3D" id="3.10.20.30">
    <property type="match status" value="1"/>
</dbReference>
<dbReference type="Gene3D" id="3.30.70.260">
    <property type="match status" value="1"/>
</dbReference>
<dbReference type="Gene3D" id="3.30.460.10">
    <property type="entry name" value="Beta Polymerase, domain 2"/>
    <property type="match status" value="1"/>
</dbReference>
<dbReference type="Gene3D" id="1.10.3210.10">
    <property type="entry name" value="Hypothetical protein af1432"/>
    <property type="match status" value="1"/>
</dbReference>
<dbReference type="InterPro" id="IPR045865">
    <property type="entry name" value="ACT-like_dom_sf"/>
</dbReference>
<dbReference type="InterPro" id="IPR002912">
    <property type="entry name" value="ACT_dom"/>
</dbReference>
<dbReference type="InterPro" id="IPR012675">
    <property type="entry name" value="Beta-grasp_dom_sf"/>
</dbReference>
<dbReference type="InterPro" id="IPR003607">
    <property type="entry name" value="HD/PDEase_dom"/>
</dbReference>
<dbReference type="InterPro" id="IPR006674">
    <property type="entry name" value="HD_domain"/>
</dbReference>
<dbReference type="InterPro" id="IPR043519">
    <property type="entry name" value="NT_sf"/>
</dbReference>
<dbReference type="InterPro" id="IPR004811">
    <property type="entry name" value="RelA/Spo_fam"/>
</dbReference>
<dbReference type="InterPro" id="IPR045600">
    <property type="entry name" value="RelA/SpoT_AH_RIS"/>
</dbReference>
<dbReference type="InterPro" id="IPR007685">
    <property type="entry name" value="RelA_SpoT"/>
</dbReference>
<dbReference type="InterPro" id="IPR004095">
    <property type="entry name" value="TGS"/>
</dbReference>
<dbReference type="InterPro" id="IPR012676">
    <property type="entry name" value="TGS-like"/>
</dbReference>
<dbReference type="InterPro" id="IPR033655">
    <property type="entry name" value="TGS_RelA/SpoT"/>
</dbReference>
<dbReference type="NCBIfam" id="TIGR00691">
    <property type="entry name" value="spoT_relA"/>
    <property type="match status" value="1"/>
</dbReference>
<dbReference type="PANTHER" id="PTHR21262:SF31">
    <property type="entry name" value="GTP PYROPHOSPHOKINASE"/>
    <property type="match status" value="1"/>
</dbReference>
<dbReference type="PANTHER" id="PTHR21262">
    <property type="entry name" value="GUANOSINE-3',5'-BIS DIPHOSPHATE 3'-PYROPHOSPHOHYDROLASE"/>
    <property type="match status" value="1"/>
</dbReference>
<dbReference type="Pfam" id="PF13291">
    <property type="entry name" value="ACT_4"/>
    <property type="match status" value="1"/>
</dbReference>
<dbReference type="Pfam" id="PF13328">
    <property type="entry name" value="HD_4"/>
    <property type="match status" value="1"/>
</dbReference>
<dbReference type="Pfam" id="PF19296">
    <property type="entry name" value="RelA_AH_RIS"/>
    <property type="match status" value="1"/>
</dbReference>
<dbReference type="Pfam" id="PF04607">
    <property type="entry name" value="RelA_SpoT"/>
    <property type="match status" value="1"/>
</dbReference>
<dbReference type="Pfam" id="PF02824">
    <property type="entry name" value="TGS"/>
    <property type="match status" value="1"/>
</dbReference>
<dbReference type="SMART" id="SM00471">
    <property type="entry name" value="HDc"/>
    <property type="match status" value="1"/>
</dbReference>
<dbReference type="SMART" id="SM00954">
    <property type="entry name" value="RelA_SpoT"/>
    <property type="match status" value="1"/>
</dbReference>
<dbReference type="SUPFAM" id="SSF55021">
    <property type="entry name" value="ACT-like"/>
    <property type="match status" value="1"/>
</dbReference>
<dbReference type="SUPFAM" id="SSF109604">
    <property type="entry name" value="HD-domain/PDEase-like"/>
    <property type="match status" value="1"/>
</dbReference>
<dbReference type="SUPFAM" id="SSF81301">
    <property type="entry name" value="Nucleotidyltransferase"/>
    <property type="match status" value="1"/>
</dbReference>
<dbReference type="SUPFAM" id="SSF81271">
    <property type="entry name" value="TGS-like"/>
    <property type="match status" value="1"/>
</dbReference>
<dbReference type="PROSITE" id="PS51671">
    <property type="entry name" value="ACT"/>
    <property type="match status" value="1"/>
</dbReference>
<dbReference type="PROSITE" id="PS51831">
    <property type="entry name" value="HD"/>
    <property type="match status" value="1"/>
</dbReference>
<dbReference type="PROSITE" id="PS51880">
    <property type="entry name" value="TGS"/>
    <property type="match status" value="1"/>
</dbReference>
<comment type="function">
    <text evidence="1">In eubacteria ppGpp (guanosine 3'-diphosphate 5'-diphosphate) is a mediator of the stringent response that coordinates a variety of cellular activities in response to changes in nutritional abundance. This enzyme catalyzes the degradation of ppGpp into GDP. It may also be capable of catalyzing the synthesis of ppGpp (By similarity).</text>
</comment>
<comment type="catalytic activity">
    <reaction>
        <text>guanosine 3',5'-bis(diphosphate) + H2O = GDP + diphosphate + H(+)</text>
        <dbReference type="Rhea" id="RHEA:14253"/>
        <dbReference type="ChEBI" id="CHEBI:15377"/>
        <dbReference type="ChEBI" id="CHEBI:15378"/>
        <dbReference type="ChEBI" id="CHEBI:33019"/>
        <dbReference type="ChEBI" id="CHEBI:58189"/>
        <dbReference type="ChEBI" id="CHEBI:77828"/>
        <dbReference type="EC" id="3.1.7.2"/>
    </reaction>
</comment>
<comment type="cofactor">
    <cofactor evidence="1">
        <name>Mn(2+)</name>
        <dbReference type="ChEBI" id="CHEBI:29035"/>
    </cofactor>
</comment>
<comment type="pathway">
    <text>Purine metabolism; ppGpp biosynthesis; ppGpp from GDP: step 1/1.</text>
</comment>
<comment type="similarity">
    <text evidence="6">Belongs to the RelA/SpoT family.</text>
</comment>